<dbReference type="EC" id="2.3.1.1"/>
<dbReference type="EMBL" id="CH408050">
    <property type="protein sequence ID" value="EDV12693.1"/>
    <property type="molecule type" value="Genomic_DNA"/>
</dbReference>
<dbReference type="SMR" id="B3LQ40"/>
<dbReference type="HOGENOM" id="CLU_013088_0_0_1"/>
<dbReference type="OrthoDB" id="31703at4893"/>
<dbReference type="UniPathway" id="UPA00068">
    <property type="reaction ID" value="UER00106"/>
</dbReference>
<dbReference type="Proteomes" id="UP000008335">
    <property type="component" value="Unassembled WGS sequence"/>
</dbReference>
<dbReference type="GO" id="GO:0005759">
    <property type="term" value="C:mitochondrial matrix"/>
    <property type="evidence" value="ECO:0007669"/>
    <property type="project" value="TreeGrafter"/>
</dbReference>
<dbReference type="GO" id="GO:0004042">
    <property type="term" value="F:L-glutamate N-acetyltransferase activity"/>
    <property type="evidence" value="ECO:0007669"/>
    <property type="project" value="InterPro"/>
</dbReference>
<dbReference type="GO" id="GO:0006526">
    <property type="term" value="P:L-arginine biosynthetic process"/>
    <property type="evidence" value="ECO:0007669"/>
    <property type="project" value="UniProtKB-UniPathway"/>
</dbReference>
<dbReference type="GO" id="GO:0006592">
    <property type="term" value="P:ornithine biosynthetic process"/>
    <property type="evidence" value="ECO:0007669"/>
    <property type="project" value="TreeGrafter"/>
</dbReference>
<dbReference type="FunFam" id="3.40.630.30:FF:000049">
    <property type="entry name" value="Amino-acid acetyltransferase, mitochondrial"/>
    <property type="match status" value="1"/>
</dbReference>
<dbReference type="Gene3D" id="3.40.630.30">
    <property type="match status" value="1"/>
</dbReference>
<dbReference type="InterPro" id="IPR011190">
    <property type="entry name" value="GlcNAc_Synth_fun"/>
</dbReference>
<dbReference type="InterPro" id="IPR006855">
    <property type="entry name" value="Vertebrate-like_GNAT_dom"/>
</dbReference>
<dbReference type="PANTHER" id="PTHR23342:SF4">
    <property type="entry name" value="AMINO-ACID ACETYLTRANSFERASE, MITOCHONDRIAL"/>
    <property type="match status" value="1"/>
</dbReference>
<dbReference type="PANTHER" id="PTHR23342">
    <property type="entry name" value="N-ACETYLGLUTAMATE SYNTHASE"/>
    <property type="match status" value="1"/>
</dbReference>
<dbReference type="Pfam" id="PF04768">
    <property type="entry name" value="NAT"/>
    <property type="match status" value="1"/>
</dbReference>
<dbReference type="PIRSF" id="PIRSF007892">
    <property type="entry name" value="NAGS_fungal"/>
    <property type="match status" value="1"/>
</dbReference>
<dbReference type="PROSITE" id="PS51731">
    <property type="entry name" value="GNAT_NAGS"/>
    <property type="match status" value="1"/>
</dbReference>
<feature type="transit peptide" description="Mitochondrion" evidence="2">
    <location>
        <begin position="1"/>
        <end position="13"/>
    </location>
</feature>
<feature type="chain" id="PRO_0000372584" description="Amino-acid acetyltransferase, mitochondrial">
    <location>
        <begin position="14"/>
        <end position="574"/>
    </location>
</feature>
<feature type="domain" description="N-acetyltransferase" evidence="3">
    <location>
        <begin position="392"/>
        <end position="560"/>
    </location>
</feature>
<keyword id="KW-0012">Acyltransferase</keyword>
<keyword id="KW-0028">Amino-acid biosynthesis</keyword>
<keyword id="KW-0496">Mitochondrion</keyword>
<keyword id="KW-0808">Transferase</keyword>
<keyword id="KW-0809">Transit peptide</keyword>
<proteinExistence type="inferred from homology"/>
<comment type="function">
    <text evidence="1">N-acetylglutamate synthase involved in arginine biosynthesis.</text>
</comment>
<comment type="catalytic activity">
    <reaction>
        <text>L-glutamate + acetyl-CoA = N-acetyl-L-glutamate + CoA + H(+)</text>
        <dbReference type="Rhea" id="RHEA:24292"/>
        <dbReference type="ChEBI" id="CHEBI:15378"/>
        <dbReference type="ChEBI" id="CHEBI:29985"/>
        <dbReference type="ChEBI" id="CHEBI:44337"/>
        <dbReference type="ChEBI" id="CHEBI:57287"/>
        <dbReference type="ChEBI" id="CHEBI:57288"/>
        <dbReference type="EC" id="2.3.1.1"/>
    </reaction>
</comment>
<comment type="activity regulation">
    <text evidence="1">Feedback inhibition by L-arginine.</text>
</comment>
<comment type="pathway">
    <text>Amino-acid biosynthesis; L-arginine biosynthesis; N(2)-acetyl-L-ornithine from L-glutamate: step 1/4.</text>
</comment>
<comment type="subunit">
    <text evidence="1">Interacts with the acetylglutamate kinase chain of AGR5,6.</text>
</comment>
<comment type="subcellular location">
    <subcellularLocation>
        <location evidence="1">Mitochondrion</location>
    </subcellularLocation>
</comment>
<comment type="similarity">
    <text evidence="4">Belongs to the acetyltransferase family.</text>
</comment>
<evidence type="ECO:0000250" key="1"/>
<evidence type="ECO:0000255" key="2"/>
<evidence type="ECO:0000255" key="3">
    <source>
        <dbReference type="PROSITE-ProRule" id="PRU00532"/>
    </source>
</evidence>
<evidence type="ECO:0000305" key="4"/>
<organism>
    <name type="scientific">Saccharomyces cerevisiae (strain RM11-1a)</name>
    <name type="common">Baker's yeast</name>
    <dbReference type="NCBI Taxonomy" id="285006"/>
    <lineage>
        <taxon>Eukaryota</taxon>
        <taxon>Fungi</taxon>
        <taxon>Dikarya</taxon>
        <taxon>Ascomycota</taxon>
        <taxon>Saccharomycotina</taxon>
        <taxon>Saccharomycetes</taxon>
        <taxon>Saccharomycetales</taxon>
        <taxon>Saccharomycetaceae</taxon>
        <taxon>Saccharomyces</taxon>
    </lineage>
</organism>
<reference key="1">
    <citation type="submission" date="2005-03" db="EMBL/GenBank/DDBJ databases">
        <title>Annotation of the Saccharomyces cerevisiae RM11-1a genome.</title>
        <authorList>
            <consortium name="The Broad Institute Genome Sequencing Platform"/>
            <person name="Birren B.W."/>
            <person name="Lander E.S."/>
            <person name="Galagan J.E."/>
            <person name="Nusbaum C."/>
            <person name="Devon K."/>
            <person name="Cuomo C."/>
            <person name="Jaffe D.B."/>
            <person name="Butler J."/>
            <person name="Alvarez P."/>
            <person name="Gnerre S."/>
            <person name="Grabherr M."/>
            <person name="Kleber M."/>
            <person name="Mauceli E.W."/>
            <person name="Brockman W."/>
            <person name="MacCallum I.A."/>
            <person name="Rounsley S."/>
            <person name="Young S.K."/>
            <person name="LaButti K."/>
            <person name="Pushparaj V."/>
            <person name="DeCaprio D."/>
            <person name="Crawford M."/>
            <person name="Koehrsen M."/>
            <person name="Engels R."/>
            <person name="Montgomery P."/>
            <person name="Pearson M."/>
            <person name="Howarth C."/>
            <person name="Larson L."/>
            <person name="Luoma S."/>
            <person name="White J."/>
            <person name="O'Leary S."/>
            <person name="Kodira C.D."/>
            <person name="Zeng Q."/>
            <person name="Yandava C."/>
            <person name="Alvarado L."/>
            <person name="Pratt S."/>
            <person name="Kruglyak L."/>
        </authorList>
    </citation>
    <scope>NUCLEOTIDE SEQUENCE [LARGE SCALE GENOMIC DNA]</scope>
    <source>
        <strain>RM11-1a</strain>
    </source>
</reference>
<accession>B3LQ40</accession>
<gene>
    <name type="primary">ARG2</name>
    <name type="ORF">SCRG_03599</name>
</gene>
<sequence>MWRRIFAHELKYDQPNASSKNLILSVLNTTATKREAKDYLSKYTNDSGQHNHCLFFIRDLHKVAPAILSQFSSVIKRLGMLGLRPMFVIPPSPTHVNIQAELLDSIVTEADLKPLHLKEGLTKSRTGLYHSVFSQESRFFDIGNSNFIPIVKPYVYNEETASEFMTKDVVKFMDCLCQGNIPHIDKFFILNNAGGIPSGERNDNAHVFINLSQELEHLSSSLSHNISTLTKREPRSQNLLHRMEVYVKKDEISSLECEYHDHLENLLLMDKVLSNLAATATGLITTVKAAALSSDRKNPLVYNLLTDRSLISSSLPRFKKKDGEIDSPANMFDDHAWYELPSQQVNAAPSNSDAVLVTTVLKKGVHIKTYDYKTLTQFNSIGLPKKFHVPEKGAKPSSNSPKLDINKFKSIIDQSFKRSLDLHDYIKRINGKIATIIVIGDYEGIAILTYEGSEENSFVYLDKFAVLPHLKGSLGISDIIFNLMFKKFPNEILWRSRKDNVVNKWYFQRSVAVLDLSIDLDPEHCDEKQSQFKLFYYGNPQYAKRALRDKKRLREFMRSVRDIKPSWENEKNIS</sequence>
<name>NAGS_YEAS1</name>
<protein>
    <recommendedName>
        <fullName>Amino-acid acetyltransferase, mitochondrial</fullName>
        <ecNumber>2.3.1.1</ecNumber>
    </recommendedName>
    <alternativeName>
        <fullName>Arginine-requiring protein 2</fullName>
    </alternativeName>
    <alternativeName>
        <fullName>Glutamate N-acetyltransferase</fullName>
    </alternativeName>
    <alternativeName>
        <fullName>N-acetylglutamate synthase</fullName>
        <shortName>AGS</shortName>
        <shortName>NAGS</shortName>
    </alternativeName>
</protein>